<name>RNPH_FRATN</name>
<accession>A0Q4X5</accession>
<gene>
    <name evidence="1" type="primary">rph</name>
    <name type="ordered locus">FTN_0387</name>
</gene>
<evidence type="ECO:0000255" key="1">
    <source>
        <dbReference type="HAMAP-Rule" id="MF_00564"/>
    </source>
</evidence>
<organism>
    <name type="scientific">Francisella tularensis subsp. novicida (strain U112)</name>
    <dbReference type="NCBI Taxonomy" id="401614"/>
    <lineage>
        <taxon>Bacteria</taxon>
        <taxon>Pseudomonadati</taxon>
        <taxon>Pseudomonadota</taxon>
        <taxon>Gammaproteobacteria</taxon>
        <taxon>Thiotrichales</taxon>
        <taxon>Francisellaceae</taxon>
        <taxon>Francisella</taxon>
    </lineage>
</organism>
<dbReference type="EC" id="2.7.7.56" evidence="1"/>
<dbReference type="EMBL" id="CP000439">
    <property type="protein sequence ID" value="ABK89290.1"/>
    <property type="molecule type" value="Genomic_DNA"/>
</dbReference>
<dbReference type="RefSeq" id="WP_003038425.1">
    <property type="nucleotide sequence ID" value="NC_008601.1"/>
</dbReference>
<dbReference type="SMR" id="A0Q4X5"/>
<dbReference type="KEGG" id="ftn:FTN_0387"/>
<dbReference type="KEGG" id="ftx:AW25_1647"/>
<dbReference type="BioCyc" id="FTUL401614:G1G75-404-MONOMER"/>
<dbReference type="Proteomes" id="UP000000762">
    <property type="component" value="Chromosome"/>
</dbReference>
<dbReference type="GO" id="GO:0000175">
    <property type="term" value="F:3'-5'-RNA exonuclease activity"/>
    <property type="evidence" value="ECO:0007669"/>
    <property type="project" value="UniProtKB-UniRule"/>
</dbReference>
<dbReference type="GO" id="GO:0000049">
    <property type="term" value="F:tRNA binding"/>
    <property type="evidence" value="ECO:0007669"/>
    <property type="project" value="UniProtKB-UniRule"/>
</dbReference>
<dbReference type="GO" id="GO:0009022">
    <property type="term" value="F:tRNA nucleotidyltransferase activity"/>
    <property type="evidence" value="ECO:0007669"/>
    <property type="project" value="UniProtKB-UniRule"/>
</dbReference>
<dbReference type="GO" id="GO:0016075">
    <property type="term" value="P:rRNA catabolic process"/>
    <property type="evidence" value="ECO:0007669"/>
    <property type="project" value="UniProtKB-UniRule"/>
</dbReference>
<dbReference type="GO" id="GO:0006364">
    <property type="term" value="P:rRNA processing"/>
    <property type="evidence" value="ECO:0007669"/>
    <property type="project" value="UniProtKB-KW"/>
</dbReference>
<dbReference type="GO" id="GO:0008033">
    <property type="term" value="P:tRNA processing"/>
    <property type="evidence" value="ECO:0007669"/>
    <property type="project" value="UniProtKB-UniRule"/>
</dbReference>
<dbReference type="CDD" id="cd11362">
    <property type="entry name" value="RNase_PH_bact"/>
    <property type="match status" value="1"/>
</dbReference>
<dbReference type="FunFam" id="3.30.230.70:FF:000003">
    <property type="entry name" value="Ribonuclease PH"/>
    <property type="match status" value="1"/>
</dbReference>
<dbReference type="Gene3D" id="3.30.230.70">
    <property type="entry name" value="GHMP Kinase, N-terminal domain"/>
    <property type="match status" value="1"/>
</dbReference>
<dbReference type="HAMAP" id="MF_00564">
    <property type="entry name" value="RNase_PH"/>
    <property type="match status" value="1"/>
</dbReference>
<dbReference type="InterPro" id="IPR001247">
    <property type="entry name" value="ExoRNase_PH_dom1"/>
</dbReference>
<dbReference type="InterPro" id="IPR015847">
    <property type="entry name" value="ExoRNase_PH_dom2"/>
</dbReference>
<dbReference type="InterPro" id="IPR036345">
    <property type="entry name" value="ExoRNase_PH_dom2_sf"/>
</dbReference>
<dbReference type="InterPro" id="IPR027408">
    <property type="entry name" value="PNPase/RNase_PH_dom_sf"/>
</dbReference>
<dbReference type="InterPro" id="IPR020568">
    <property type="entry name" value="Ribosomal_Su5_D2-typ_SF"/>
</dbReference>
<dbReference type="InterPro" id="IPR050080">
    <property type="entry name" value="RNase_PH"/>
</dbReference>
<dbReference type="InterPro" id="IPR002381">
    <property type="entry name" value="RNase_PH_bac-type"/>
</dbReference>
<dbReference type="InterPro" id="IPR018336">
    <property type="entry name" value="RNase_PH_CS"/>
</dbReference>
<dbReference type="NCBIfam" id="TIGR01966">
    <property type="entry name" value="RNasePH"/>
    <property type="match status" value="1"/>
</dbReference>
<dbReference type="PANTHER" id="PTHR11953">
    <property type="entry name" value="EXOSOME COMPLEX COMPONENT"/>
    <property type="match status" value="1"/>
</dbReference>
<dbReference type="PANTHER" id="PTHR11953:SF0">
    <property type="entry name" value="EXOSOME COMPLEX COMPONENT RRP41"/>
    <property type="match status" value="1"/>
</dbReference>
<dbReference type="Pfam" id="PF01138">
    <property type="entry name" value="RNase_PH"/>
    <property type="match status" value="1"/>
</dbReference>
<dbReference type="Pfam" id="PF03725">
    <property type="entry name" value="RNase_PH_C"/>
    <property type="match status" value="1"/>
</dbReference>
<dbReference type="SUPFAM" id="SSF55666">
    <property type="entry name" value="Ribonuclease PH domain 2-like"/>
    <property type="match status" value="1"/>
</dbReference>
<dbReference type="SUPFAM" id="SSF54211">
    <property type="entry name" value="Ribosomal protein S5 domain 2-like"/>
    <property type="match status" value="1"/>
</dbReference>
<dbReference type="PROSITE" id="PS01277">
    <property type="entry name" value="RIBONUCLEASE_PH"/>
    <property type="match status" value="1"/>
</dbReference>
<comment type="function">
    <text evidence="1">Phosphorolytic 3'-5' exoribonuclease that plays an important role in tRNA 3'-end maturation. Removes nucleotide residues following the 3'-CCA terminus of tRNAs; can also add nucleotides to the ends of RNA molecules by using nucleoside diphosphates as substrates, but this may not be physiologically important. Probably plays a role in initiation of 16S rRNA degradation (leading to ribosome degradation) during starvation.</text>
</comment>
<comment type="catalytic activity">
    <reaction evidence="1">
        <text>tRNA(n+1) + phosphate = tRNA(n) + a ribonucleoside 5'-diphosphate</text>
        <dbReference type="Rhea" id="RHEA:10628"/>
        <dbReference type="Rhea" id="RHEA-COMP:17343"/>
        <dbReference type="Rhea" id="RHEA-COMP:17344"/>
        <dbReference type="ChEBI" id="CHEBI:43474"/>
        <dbReference type="ChEBI" id="CHEBI:57930"/>
        <dbReference type="ChEBI" id="CHEBI:173114"/>
        <dbReference type="EC" id="2.7.7.56"/>
    </reaction>
</comment>
<comment type="subunit">
    <text evidence="1">Homohexameric ring arranged as a trimer of dimers.</text>
</comment>
<comment type="similarity">
    <text evidence="1">Belongs to the RNase PH family.</text>
</comment>
<proteinExistence type="inferred from homology"/>
<reference key="1">
    <citation type="journal article" date="2007" name="Genome Biol.">
        <title>Comparison of Francisella tularensis genomes reveals evolutionary events associated with the emergence of human pathogenic strains.</title>
        <authorList>
            <person name="Rohmer L."/>
            <person name="Fong C."/>
            <person name="Abmayr S."/>
            <person name="Wasnick M."/>
            <person name="Larson Freeman T.J."/>
            <person name="Radey M."/>
            <person name="Guina T."/>
            <person name="Svensson K."/>
            <person name="Hayden H.S."/>
            <person name="Jacobs M."/>
            <person name="Gallagher L.A."/>
            <person name="Manoil C."/>
            <person name="Ernst R.K."/>
            <person name="Drees B."/>
            <person name="Buckley D."/>
            <person name="Haugen E."/>
            <person name="Bovee D."/>
            <person name="Zhou Y."/>
            <person name="Chang J."/>
            <person name="Levy R."/>
            <person name="Lim R."/>
            <person name="Gillett W."/>
            <person name="Guenthener D."/>
            <person name="Kang A."/>
            <person name="Shaffer S.A."/>
            <person name="Taylor G."/>
            <person name="Chen J."/>
            <person name="Gallis B."/>
            <person name="D'Argenio D.A."/>
            <person name="Forsman M."/>
            <person name="Olson M.V."/>
            <person name="Goodlett D.R."/>
            <person name="Kaul R."/>
            <person name="Miller S.I."/>
            <person name="Brittnacher M.J."/>
        </authorList>
    </citation>
    <scope>NUCLEOTIDE SEQUENCE [LARGE SCALE GENOMIC DNA]</scope>
    <source>
        <strain>U112</strain>
    </source>
</reference>
<protein>
    <recommendedName>
        <fullName evidence="1">Ribonuclease PH</fullName>
        <shortName evidence="1">RNase PH</shortName>
        <ecNumber evidence="1">2.7.7.56</ecNumber>
    </recommendedName>
    <alternativeName>
        <fullName evidence="1">tRNA nucleotidyltransferase</fullName>
    </alternativeName>
</protein>
<feature type="chain" id="PRO_1000024809" description="Ribonuclease PH">
    <location>
        <begin position="1"/>
        <end position="235"/>
    </location>
</feature>
<feature type="binding site" evidence="1">
    <location>
        <position position="86"/>
    </location>
    <ligand>
        <name>phosphate</name>
        <dbReference type="ChEBI" id="CHEBI:43474"/>
        <note>substrate</note>
    </ligand>
</feature>
<feature type="binding site" evidence="1">
    <location>
        <begin position="124"/>
        <end position="126"/>
    </location>
    <ligand>
        <name>phosphate</name>
        <dbReference type="ChEBI" id="CHEBI:43474"/>
        <note>substrate</note>
    </ligand>
</feature>
<sequence length="235" mass="25460">MRPSGRNNDQLRNLKVTHNFTKHAEGSVLIEFGDTKVICTASVVAGVPEFKKDSGEGWLTAEYGMLPRSTHTRMDREAARGKQSGRTQEIQRLIGRALRASVDLTAIGENTIKVDCDVIQADGGTRTASITGASLAIADAIEYMKQNGMLDEQANPLLSQVAAISVGIYNNEPVLDLDYDEDSNAETDMNVVMNSNGGIIEIQGTAEGKDFSEEEFAKMLGLAKKGIKEIFATVF</sequence>
<keyword id="KW-0548">Nucleotidyltransferase</keyword>
<keyword id="KW-0694">RNA-binding</keyword>
<keyword id="KW-0698">rRNA processing</keyword>
<keyword id="KW-0808">Transferase</keyword>
<keyword id="KW-0819">tRNA processing</keyword>
<keyword id="KW-0820">tRNA-binding</keyword>